<accession>B7N1G6</accession>
<dbReference type="EC" id="4.2.3.4" evidence="1"/>
<dbReference type="EMBL" id="CU928162">
    <property type="protein sequence ID" value="CAR10184.2"/>
    <property type="molecule type" value="Genomic_DNA"/>
</dbReference>
<dbReference type="RefSeq" id="WP_000439856.1">
    <property type="nucleotide sequence ID" value="NC_011745.1"/>
</dbReference>
<dbReference type="SMR" id="B7N1G6"/>
<dbReference type="KEGG" id="ecq:ECED1_4047"/>
<dbReference type="HOGENOM" id="CLU_001201_0_2_6"/>
<dbReference type="UniPathway" id="UPA00053">
    <property type="reaction ID" value="UER00085"/>
</dbReference>
<dbReference type="Proteomes" id="UP000000748">
    <property type="component" value="Chromosome"/>
</dbReference>
<dbReference type="GO" id="GO:0005737">
    <property type="term" value="C:cytoplasm"/>
    <property type="evidence" value="ECO:0007669"/>
    <property type="project" value="UniProtKB-SubCell"/>
</dbReference>
<dbReference type="GO" id="GO:0003856">
    <property type="term" value="F:3-dehydroquinate synthase activity"/>
    <property type="evidence" value="ECO:0007669"/>
    <property type="project" value="UniProtKB-UniRule"/>
</dbReference>
<dbReference type="GO" id="GO:0046872">
    <property type="term" value="F:metal ion binding"/>
    <property type="evidence" value="ECO:0007669"/>
    <property type="project" value="UniProtKB-KW"/>
</dbReference>
<dbReference type="GO" id="GO:0000166">
    <property type="term" value="F:nucleotide binding"/>
    <property type="evidence" value="ECO:0007669"/>
    <property type="project" value="UniProtKB-KW"/>
</dbReference>
<dbReference type="GO" id="GO:0008652">
    <property type="term" value="P:amino acid biosynthetic process"/>
    <property type="evidence" value="ECO:0007669"/>
    <property type="project" value="UniProtKB-KW"/>
</dbReference>
<dbReference type="GO" id="GO:0009073">
    <property type="term" value="P:aromatic amino acid family biosynthetic process"/>
    <property type="evidence" value="ECO:0007669"/>
    <property type="project" value="UniProtKB-KW"/>
</dbReference>
<dbReference type="GO" id="GO:0009423">
    <property type="term" value="P:chorismate biosynthetic process"/>
    <property type="evidence" value="ECO:0007669"/>
    <property type="project" value="UniProtKB-UniRule"/>
</dbReference>
<dbReference type="CDD" id="cd08195">
    <property type="entry name" value="DHQS"/>
    <property type="match status" value="1"/>
</dbReference>
<dbReference type="FunFam" id="1.20.1090.10:FF:000002">
    <property type="entry name" value="3-dehydroquinate synthase"/>
    <property type="match status" value="1"/>
</dbReference>
<dbReference type="FunFam" id="3.40.50.1970:FF:000001">
    <property type="entry name" value="3-dehydroquinate synthase"/>
    <property type="match status" value="1"/>
</dbReference>
<dbReference type="Gene3D" id="3.40.50.1970">
    <property type="match status" value="1"/>
</dbReference>
<dbReference type="Gene3D" id="1.20.1090.10">
    <property type="entry name" value="Dehydroquinate synthase-like - alpha domain"/>
    <property type="match status" value="1"/>
</dbReference>
<dbReference type="HAMAP" id="MF_00110">
    <property type="entry name" value="DHQ_synthase"/>
    <property type="match status" value="1"/>
</dbReference>
<dbReference type="InterPro" id="IPR050071">
    <property type="entry name" value="Dehydroquinate_synthase"/>
</dbReference>
<dbReference type="InterPro" id="IPR016037">
    <property type="entry name" value="DHQ_synth_AroB"/>
</dbReference>
<dbReference type="InterPro" id="IPR030963">
    <property type="entry name" value="DHQ_synth_fam"/>
</dbReference>
<dbReference type="InterPro" id="IPR030960">
    <property type="entry name" value="DHQS/DOIS_N"/>
</dbReference>
<dbReference type="InterPro" id="IPR056179">
    <property type="entry name" value="DHQS_C"/>
</dbReference>
<dbReference type="NCBIfam" id="TIGR01357">
    <property type="entry name" value="aroB"/>
    <property type="match status" value="1"/>
</dbReference>
<dbReference type="PANTHER" id="PTHR43622">
    <property type="entry name" value="3-DEHYDROQUINATE SYNTHASE"/>
    <property type="match status" value="1"/>
</dbReference>
<dbReference type="PANTHER" id="PTHR43622:SF7">
    <property type="entry name" value="3-DEHYDROQUINATE SYNTHASE, CHLOROPLASTIC"/>
    <property type="match status" value="1"/>
</dbReference>
<dbReference type="Pfam" id="PF01761">
    <property type="entry name" value="DHQ_synthase"/>
    <property type="match status" value="1"/>
</dbReference>
<dbReference type="Pfam" id="PF24621">
    <property type="entry name" value="DHQS_C"/>
    <property type="match status" value="1"/>
</dbReference>
<dbReference type="PIRSF" id="PIRSF001455">
    <property type="entry name" value="DHQ_synth"/>
    <property type="match status" value="1"/>
</dbReference>
<dbReference type="SUPFAM" id="SSF56796">
    <property type="entry name" value="Dehydroquinate synthase-like"/>
    <property type="match status" value="1"/>
</dbReference>
<feature type="chain" id="PRO_1000119082" description="3-dehydroquinate synthase">
    <location>
        <begin position="1"/>
        <end position="362"/>
    </location>
</feature>
<feature type="binding site" evidence="1">
    <location>
        <begin position="71"/>
        <end position="76"/>
    </location>
    <ligand>
        <name>NAD(+)</name>
        <dbReference type="ChEBI" id="CHEBI:57540"/>
    </ligand>
</feature>
<feature type="binding site" evidence="1">
    <location>
        <begin position="105"/>
        <end position="109"/>
    </location>
    <ligand>
        <name>NAD(+)</name>
        <dbReference type="ChEBI" id="CHEBI:57540"/>
    </ligand>
</feature>
<feature type="binding site" evidence="1">
    <location>
        <begin position="129"/>
        <end position="130"/>
    </location>
    <ligand>
        <name>NAD(+)</name>
        <dbReference type="ChEBI" id="CHEBI:57540"/>
    </ligand>
</feature>
<feature type="binding site" evidence="1">
    <location>
        <position position="142"/>
    </location>
    <ligand>
        <name>NAD(+)</name>
        <dbReference type="ChEBI" id="CHEBI:57540"/>
    </ligand>
</feature>
<feature type="binding site" evidence="1">
    <location>
        <position position="151"/>
    </location>
    <ligand>
        <name>NAD(+)</name>
        <dbReference type="ChEBI" id="CHEBI:57540"/>
    </ligand>
</feature>
<feature type="binding site" evidence="1">
    <location>
        <begin position="169"/>
        <end position="172"/>
    </location>
    <ligand>
        <name>NAD(+)</name>
        <dbReference type="ChEBI" id="CHEBI:57540"/>
    </ligand>
</feature>
<feature type="binding site" evidence="1">
    <location>
        <position position="184"/>
    </location>
    <ligand>
        <name>Zn(2+)</name>
        <dbReference type="ChEBI" id="CHEBI:29105"/>
    </ligand>
</feature>
<feature type="binding site" evidence="1">
    <location>
        <position position="247"/>
    </location>
    <ligand>
        <name>Zn(2+)</name>
        <dbReference type="ChEBI" id="CHEBI:29105"/>
    </ligand>
</feature>
<feature type="binding site" evidence="1">
    <location>
        <position position="264"/>
    </location>
    <ligand>
        <name>Zn(2+)</name>
        <dbReference type="ChEBI" id="CHEBI:29105"/>
    </ligand>
</feature>
<reference key="1">
    <citation type="journal article" date="2009" name="PLoS Genet.">
        <title>Organised genome dynamics in the Escherichia coli species results in highly diverse adaptive paths.</title>
        <authorList>
            <person name="Touchon M."/>
            <person name="Hoede C."/>
            <person name="Tenaillon O."/>
            <person name="Barbe V."/>
            <person name="Baeriswyl S."/>
            <person name="Bidet P."/>
            <person name="Bingen E."/>
            <person name="Bonacorsi S."/>
            <person name="Bouchier C."/>
            <person name="Bouvet O."/>
            <person name="Calteau A."/>
            <person name="Chiapello H."/>
            <person name="Clermont O."/>
            <person name="Cruveiller S."/>
            <person name="Danchin A."/>
            <person name="Diard M."/>
            <person name="Dossat C."/>
            <person name="Karoui M.E."/>
            <person name="Frapy E."/>
            <person name="Garry L."/>
            <person name="Ghigo J.M."/>
            <person name="Gilles A.M."/>
            <person name="Johnson J."/>
            <person name="Le Bouguenec C."/>
            <person name="Lescat M."/>
            <person name="Mangenot S."/>
            <person name="Martinez-Jehanne V."/>
            <person name="Matic I."/>
            <person name="Nassif X."/>
            <person name="Oztas S."/>
            <person name="Petit M.A."/>
            <person name="Pichon C."/>
            <person name="Rouy Z."/>
            <person name="Ruf C.S."/>
            <person name="Schneider D."/>
            <person name="Tourret J."/>
            <person name="Vacherie B."/>
            <person name="Vallenet D."/>
            <person name="Medigue C."/>
            <person name="Rocha E.P.C."/>
            <person name="Denamur E."/>
        </authorList>
    </citation>
    <scope>NUCLEOTIDE SEQUENCE [LARGE SCALE GENOMIC DNA]</scope>
    <source>
        <strain>ED1a</strain>
    </source>
</reference>
<gene>
    <name evidence="1" type="primary">aroB</name>
    <name type="ordered locus">ECED1_4047</name>
</gene>
<proteinExistence type="inferred from homology"/>
<sequence length="362" mass="38882">MERIVVTLGERSYPITIASGLFNEPASFLPLKSGEQVMLVTNETLAPLYLDKVRGVLEQAGVNVDSVILPDGEQYKSLAVLDTVFTALLQKPHGRDTTLVALGGGVVGDLTGFAAASYQRGVRFIQVPTTLLSQVDSSVGGKTAVNHPLGKNMIGAFYQPASVVVDLDCLKTLPPRELASGLAEVIKYGIILDGAFFNWLEENLDALLRLDGPAMAYCIRRCCELKAEVVAADERETGLRALLNLGHTFGHAIEAEMGYGNWLHGEAVAVGMVMAARTSERLGQFSSAETQRIITLLTRAGLPVNGPREMSAQAYLPHMLRDKKVLAGEMRLILPLAIGKSEVRSGVSHELVLNAIADCQSA</sequence>
<protein>
    <recommendedName>
        <fullName evidence="1">3-dehydroquinate synthase</fullName>
        <shortName evidence="1">DHQS</shortName>
        <ecNumber evidence="1">4.2.3.4</ecNumber>
    </recommendedName>
</protein>
<comment type="function">
    <text evidence="1">Catalyzes the conversion of 3-deoxy-D-arabino-heptulosonate 7-phosphate (DAHP) to dehydroquinate (DHQ).</text>
</comment>
<comment type="catalytic activity">
    <reaction evidence="1">
        <text>7-phospho-2-dehydro-3-deoxy-D-arabino-heptonate = 3-dehydroquinate + phosphate</text>
        <dbReference type="Rhea" id="RHEA:21968"/>
        <dbReference type="ChEBI" id="CHEBI:32364"/>
        <dbReference type="ChEBI" id="CHEBI:43474"/>
        <dbReference type="ChEBI" id="CHEBI:58394"/>
        <dbReference type="EC" id="4.2.3.4"/>
    </reaction>
</comment>
<comment type="cofactor">
    <cofactor evidence="1">
        <name>Co(2+)</name>
        <dbReference type="ChEBI" id="CHEBI:48828"/>
    </cofactor>
    <cofactor evidence="1">
        <name>Zn(2+)</name>
        <dbReference type="ChEBI" id="CHEBI:29105"/>
    </cofactor>
    <text evidence="1">Binds 1 divalent metal cation per subunit. Can use either Co(2+) or Zn(2+).</text>
</comment>
<comment type="cofactor">
    <cofactor evidence="1">
        <name>NAD(+)</name>
        <dbReference type="ChEBI" id="CHEBI:57540"/>
    </cofactor>
</comment>
<comment type="pathway">
    <text evidence="1">Metabolic intermediate biosynthesis; chorismate biosynthesis; chorismate from D-erythrose 4-phosphate and phosphoenolpyruvate: step 2/7.</text>
</comment>
<comment type="subcellular location">
    <subcellularLocation>
        <location evidence="1">Cytoplasm</location>
    </subcellularLocation>
</comment>
<comment type="similarity">
    <text evidence="1">Belongs to the sugar phosphate cyclases superfamily. Dehydroquinate synthase family.</text>
</comment>
<evidence type="ECO:0000255" key="1">
    <source>
        <dbReference type="HAMAP-Rule" id="MF_00110"/>
    </source>
</evidence>
<keyword id="KW-0028">Amino-acid biosynthesis</keyword>
<keyword id="KW-0057">Aromatic amino acid biosynthesis</keyword>
<keyword id="KW-0170">Cobalt</keyword>
<keyword id="KW-0963">Cytoplasm</keyword>
<keyword id="KW-0456">Lyase</keyword>
<keyword id="KW-0479">Metal-binding</keyword>
<keyword id="KW-0520">NAD</keyword>
<keyword id="KW-0547">Nucleotide-binding</keyword>
<keyword id="KW-0862">Zinc</keyword>
<name>AROB_ECO81</name>
<organism>
    <name type="scientific">Escherichia coli O81 (strain ED1a)</name>
    <dbReference type="NCBI Taxonomy" id="585397"/>
    <lineage>
        <taxon>Bacteria</taxon>
        <taxon>Pseudomonadati</taxon>
        <taxon>Pseudomonadota</taxon>
        <taxon>Gammaproteobacteria</taxon>
        <taxon>Enterobacterales</taxon>
        <taxon>Enterobacteriaceae</taxon>
        <taxon>Escherichia</taxon>
    </lineage>
</organism>